<dbReference type="EC" id="3.1.3.11"/>
<dbReference type="EC" id="3.1.3.37"/>
<dbReference type="EMBL" id="CP000553">
    <property type="protein sequence ID" value="ABM75363.1"/>
    <property type="molecule type" value="Genomic_DNA"/>
</dbReference>
<dbReference type="SMR" id="A2C1K3"/>
<dbReference type="KEGG" id="pme:NATL1_08051"/>
<dbReference type="eggNOG" id="COG1494">
    <property type="taxonomic scope" value="Bacteria"/>
</dbReference>
<dbReference type="HOGENOM" id="CLU_054938_0_0_3"/>
<dbReference type="UniPathway" id="UPA00116"/>
<dbReference type="Proteomes" id="UP000002592">
    <property type="component" value="Chromosome"/>
</dbReference>
<dbReference type="GO" id="GO:0005829">
    <property type="term" value="C:cytosol"/>
    <property type="evidence" value="ECO:0007669"/>
    <property type="project" value="TreeGrafter"/>
</dbReference>
<dbReference type="GO" id="GO:0042132">
    <property type="term" value="F:fructose 1,6-bisphosphate 1-phosphatase activity"/>
    <property type="evidence" value="ECO:0007669"/>
    <property type="project" value="UniProtKB-EC"/>
</dbReference>
<dbReference type="GO" id="GO:0046872">
    <property type="term" value="F:metal ion binding"/>
    <property type="evidence" value="ECO:0007669"/>
    <property type="project" value="UniProtKB-KW"/>
</dbReference>
<dbReference type="GO" id="GO:0050278">
    <property type="term" value="F:sedoheptulose-bisphosphatase activity"/>
    <property type="evidence" value="ECO:0007669"/>
    <property type="project" value="UniProtKB-EC"/>
</dbReference>
<dbReference type="GO" id="GO:0030388">
    <property type="term" value="P:fructose 1,6-bisphosphate metabolic process"/>
    <property type="evidence" value="ECO:0007669"/>
    <property type="project" value="TreeGrafter"/>
</dbReference>
<dbReference type="GO" id="GO:0006094">
    <property type="term" value="P:gluconeogenesis"/>
    <property type="evidence" value="ECO:0007669"/>
    <property type="project" value="InterPro"/>
</dbReference>
<dbReference type="GO" id="GO:0006071">
    <property type="term" value="P:glycerol metabolic process"/>
    <property type="evidence" value="ECO:0007669"/>
    <property type="project" value="InterPro"/>
</dbReference>
<dbReference type="GO" id="GO:0019253">
    <property type="term" value="P:reductive pentose-phosphate cycle"/>
    <property type="evidence" value="ECO:0007669"/>
    <property type="project" value="UniProtKB-UniPathway"/>
</dbReference>
<dbReference type="CDD" id="cd01516">
    <property type="entry name" value="FBPase_glpX"/>
    <property type="match status" value="1"/>
</dbReference>
<dbReference type="FunFam" id="3.40.190.90:FF:000001">
    <property type="entry name" value="Fructose-1,6-bisphosphatase"/>
    <property type="match status" value="1"/>
</dbReference>
<dbReference type="Gene3D" id="3.40.190.90">
    <property type="match status" value="1"/>
</dbReference>
<dbReference type="Gene3D" id="3.30.540.10">
    <property type="entry name" value="Fructose-1,6-Bisphosphatase, subunit A, domain 1"/>
    <property type="match status" value="1"/>
</dbReference>
<dbReference type="InterPro" id="IPR004464">
    <property type="entry name" value="FBPase_class-2/SBPase"/>
</dbReference>
<dbReference type="NCBIfam" id="TIGR00330">
    <property type="entry name" value="glpX"/>
    <property type="match status" value="1"/>
</dbReference>
<dbReference type="PANTHER" id="PTHR30447:SF0">
    <property type="entry name" value="FRUCTOSE-1,6-BISPHOSPHATASE 1 CLASS 2-RELATED"/>
    <property type="match status" value="1"/>
</dbReference>
<dbReference type="PANTHER" id="PTHR30447">
    <property type="entry name" value="FRUCTOSE-1,6-BISPHOSPHATASE CLASS 2"/>
    <property type="match status" value="1"/>
</dbReference>
<dbReference type="Pfam" id="PF03320">
    <property type="entry name" value="FBPase_glpX"/>
    <property type="match status" value="1"/>
</dbReference>
<dbReference type="PIRSF" id="PIRSF004532">
    <property type="entry name" value="GlpX"/>
    <property type="match status" value="1"/>
</dbReference>
<dbReference type="SUPFAM" id="SSF56655">
    <property type="entry name" value="Carbohydrate phosphatase"/>
    <property type="match status" value="1"/>
</dbReference>
<name>FBSB_PROM1</name>
<protein>
    <recommendedName>
        <fullName>D-fructose 1,6-bisphosphatase class 2/sedoheptulose 1,7-bisphosphatase</fullName>
        <shortName>FBPase class 2/SBPase</shortName>
        <ecNumber>3.1.3.11</ecNumber>
        <ecNumber>3.1.3.37</ecNumber>
    </recommendedName>
</protein>
<comment type="function">
    <text evidence="1">Catalyzes the hydrolysis of fructose 1,6-bisphosphate (Fru 1,6-P2) and sedoheptulose 1,7-bisphosphate (Sed 1,7-P2) to fructose 6-phosphate and sedoheptulose 7-phosphate, respectively.</text>
</comment>
<comment type="catalytic activity">
    <reaction>
        <text>beta-D-fructose 1,6-bisphosphate + H2O = beta-D-fructose 6-phosphate + phosphate</text>
        <dbReference type="Rhea" id="RHEA:11064"/>
        <dbReference type="ChEBI" id="CHEBI:15377"/>
        <dbReference type="ChEBI" id="CHEBI:32966"/>
        <dbReference type="ChEBI" id="CHEBI:43474"/>
        <dbReference type="ChEBI" id="CHEBI:57634"/>
        <dbReference type="EC" id="3.1.3.11"/>
    </reaction>
</comment>
<comment type="catalytic activity">
    <reaction>
        <text>D-sedoheptulose 1,7-bisphosphate + H2O = D-sedoheptulose 7-phosphate + phosphate</text>
        <dbReference type="Rhea" id="RHEA:17461"/>
        <dbReference type="ChEBI" id="CHEBI:15377"/>
        <dbReference type="ChEBI" id="CHEBI:43474"/>
        <dbReference type="ChEBI" id="CHEBI:57483"/>
        <dbReference type="ChEBI" id="CHEBI:58335"/>
        <dbReference type="EC" id="3.1.3.37"/>
    </reaction>
</comment>
<comment type="cofactor">
    <cofactor evidence="1">
        <name>Mn(2+)</name>
        <dbReference type="ChEBI" id="CHEBI:29035"/>
    </cofactor>
</comment>
<comment type="pathway">
    <text>Carbohydrate biosynthesis; Calvin cycle.</text>
</comment>
<comment type="subunit">
    <text evidence="1">Homotetramer.</text>
</comment>
<comment type="similarity">
    <text evidence="2">Belongs to the FBPase class 2 family.</text>
</comment>
<proteinExistence type="inferred from homology"/>
<organism>
    <name type="scientific">Prochlorococcus marinus (strain NATL1A)</name>
    <dbReference type="NCBI Taxonomy" id="167555"/>
    <lineage>
        <taxon>Bacteria</taxon>
        <taxon>Bacillati</taxon>
        <taxon>Cyanobacteriota</taxon>
        <taxon>Cyanophyceae</taxon>
        <taxon>Synechococcales</taxon>
        <taxon>Prochlorococcaceae</taxon>
        <taxon>Prochlorococcus</taxon>
    </lineage>
</organism>
<accession>A2C1K3</accession>
<sequence length="334" mass="35271">MDRTLVQEILEVVEQAAIASAQLTGLGQKDEADAAAVEAMRKRMGTIQMQGRIVIGEGERDEAPMLYIGEEVGSGTGPGVDFAVDPCEGTNLCANSQRGSMAVLAASDRGGLFNAPDFYMNKLAAPPAAKGKVDIRKTPTENIKILSDCLGIAISDLTIVVMDRARHKNLVSEIRSTGARIQPISDGDVQAAIACGFEGTGTHCLMGIGAAPEGVISAAAMRALGGHFQGQLVYDPAIAQTSEWADYTKEGNIKRLNEMGITDIDKIYEANELASGENVAFAGSGITDGLLFDGVKFEKDCTRTSSLVISTLDQTARFTNTVHIKDGAQSISLK</sequence>
<gene>
    <name type="ordered locus">NATL1_08051</name>
</gene>
<evidence type="ECO:0000250" key="1"/>
<evidence type="ECO:0000305" key="2"/>
<reference key="1">
    <citation type="journal article" date="2007" name="PLoS Genet.">
        <title>Patterns and implications of gene gain and loss in the evolution of Prochlorococcus.</title>
        <authorList>
            <person name="Kettler G.C."/>
            <person name="Martiny A.C."/>
            <person name="Huang K."/>
            <person name="Zucker J."/>
            <person name="Coleman M.L."/>
            <person name="Rodrigue S."/>
            <person name="Chen F."/>
            <person name="Lapidus A."/>
            <person name="Ferriera S."/>
            <person name="Johnson J."/>
            <person name="Steglich C."/>
            <person name="Church G.M."/>
            <person name="Richardson P."/>
            <person name="Chisholm S.W."/>
        </authorList>
    </citation>
    <scope>NUCLEOTIDE SEQUENCE [LARGE SCALE GENOMIC DNA]</scope>
    <source>
        <strain>NATL1A</strain>
    </source>
</reference>
<feature type="chain" id="PRO_0000342721" description="D-fructose 1,6-bisphosphatase class 2/sedoheptulose 1,7-bisphosphatase">
    <location>
        <begin position="1"/>
        <end position="334"/>
    </location>
</feature>
<feature type="binding site" evidence="1">
    <location>
        <position position="33"/>
    </location>
    <ligand>
        <name>Mn(2+)</name>
        <dbReference type="ChEBI" id="CHEBI:29035"/>
        <label>1</label>
    </ligand>
</feature>
<feature type="binding site" evidence="1">
    <location>
        <position position="57"/>
    </location>
    <ligand>
        <name>Mn(2+)</name>
        <dbReference type="ChEBI" id="CHEBI:29035"/>
        <label>1</label>
    </ligand>
</feature>
<feature type="binding site" evidence="1">
    <location>
        <position position="85"/>
    </location>
    <ligand>
        <name>Mn(2+)</name>
        <dbReference type="ChEBI" id="CHEBI:29035"/>
        <label>2</label>
    </ligand>
</feature>
<feature type="binding site" evidence="1">
    <location>
        <begin position="88"/>
        <end position="90"/>
    </location>
    <ligand>
        <name>substrate</name>
    </ligand>
</feature>
<feature type="binding site" evidence="1">
    <location>
        <position position="88"/>
    </location>
    <ligand>
        <name>Mn(2+)</name>
        <dbReference type="ChEBI" id="CHEBI:29035"/>
        <label>2</label>
    </ligand>
</feature>
<feature type="binding site" evidence="1">
    <location>
        <position position="119"/>
    </location>
    <ligand>
        <name>substrate</name>
    </ligand>
</feature>
<feature type="binding site" evidence="1">
    <location>
        <begin position="164"/>
        <end position="166"/>
    </location>
    <ligand>
        <name>substrate</name>
    </ligand>
</feature>
<feature type="binding site" evidence="1">
    <location>
        <begin position="186"/>
        <end position="188"/>
    </location>
    <ligand>
        <name>substrate</name>
    </ligand>
</feature>
<feature type="binding site" evidence="1">
    <location>
        <position position="213"/>
    </location>
    <ligand>
        <name>Mn(2+)</name>
        <dbReference type="ChEBI" id="CHEBI:29035"/>
        <label>2</label>
    </ligand>
</feature>
<keyword id="KW-0113">Calvin cycle</keyword>
<keyword id="KW-0119">Carbohydrate metabolism</keyword>
<keyword id="KW-0378">Hydrolase</keyword>
<keyword id="KW-0464">Manganese</keyword>
<keyword id="KW-0479">Metal-binding</keyword>